<keyword id="KW-0046">Antibiotic resistance</keyword>
<keyword id="KW-0997">Cell inner membrane</keyword>
<keyword id="KW-1003">Cell membrane</keyword>
<keyword id="KW-0133">Cell shape</keyword>
<keyword id="KW-0961">Cell wall biogenesis/degradation</keyword>
<keyword id="KW-0378">Hydrolase</keyword>
<keyword id="KW-0472">Membrane</keyword>
<keyword id="KW-0573">Peptidoglycan synthesis</keyword>
<keyword id="KW-0812">Transmembrane</keyword>
<keyword id="KW-1133">Transmembrane helix</keyword>
<comment type="function">
    <text evidence="1">Catalyzes the dephosphorylation of undecaprenyl diphosphate (UPP). Confers resistance to bacitracin.</text>
</comment>
<comment type="catalytic activity">
    <reaction evidence="1">
        <text>di-trans,octa-cis-undecaprenyl diphosphate + H2O = di-trans,octa-cis-undecaprenyl phosphate + phosphate + H(+)</text>
        <dbReference type="Rhea" id="RHEA:28094"/>
        <dbReference type="ChEBI" id="CHEBI:15377"/>
        <dbReference type="ChEBI" id="CHEBI:15378"/>
        <dbReference type="ChEBI" id="CHEBI:43474"/>
        <dbReference type="ChEBI" id="CHEBI:58405"/>
        <dbReference type="ChEBI" id="CHEBI:60392"/>
        <dbReference type="EC" id="3.6.1.27"/>
    </reaction>
</comment>
<comment type="subcellular location">
    <subcellularLocation>
        <location evidence="1">Cell inner membrane</location>
        <topology evidence="1">Multi-pass membrane protein</topology>
    </subcellularLocation>
</comment>
<comment type="miscellaneous">
    <text>Bacitracin is thought to be involved in the inhibition of peptidoglycan synthesis by sequestering undecaprenyl diphosphate, thereby reducing the pool of lipid carrier available.</text>
</comment>
<comment type="similarity">
    <text evidence="1">Belongs to the UppP family.</text>
</comment>
<sequence length="273" mass="29773">MSDMHSLLIAAILGVVEGLTEFLPVSSTGHMIIVGHLLGFEGDTAKTFEVVIQLGSILAVVVMFWRRLFGLIGIHFGRPLQHEGESKGRLTLIHILLGMIPAVVLGLLFHDTIKSLFNPINVMYALVVGGLLLIAAECLKPKEPRAPGLDDMTYRQAFMIGCFQCLALWPGFSRSGATISGGMLMGVSRYAASEFSFLLAVPMMMGATALDLYKSWGFLTTGDIPMFAVGFITAFVVALIAIKTFLQLIKRISFIPFAIYRFIVAAAVYVVFF</sequence>
<name>UPPP_SHIF8</name>
<dbReference type="EC" id="3.6.1.27" evidence="1"/>
<dbReference type="EMBL" id="CP000266">
    <property type="protein sequence ID" value="ABF05159.1"/>
    <property type="molecule type" value="Genomic_DNA"/>
</dbReference>
<dbReference type="RefSeq" id="WP_001305111.1">
    <property type="nucleotide sequence ID" value="NC_008258.1"/>
</dbReference>
<dbReference type="SMR" id="Q0T0K6"/>
<dbReference type="GeneID" id="86861207"/>
<dbReference type="KEGG" id="sfv:SFV_3097"/>
<dbReference type="HOGENOM" id="CLU_060296_2_0_6"/>
<dbReference type="Proteomes" id="UP000000659">
    <property type="component" value="Chromosome"/>
</dbReference>
<dbReference type="GO" id="GO:0005886">
    <property type="term" value="C:plasma membrane"/>
    <property type="evidence" value="ECO:0007669"/>
    <property type="project" value="UniProtKB-SubCell"/>
</dbReference>
<dbReference type="GO" id="GO:0050380">
    <property type="term" value="F:undecaprenyl-diphosphatase activity"/>
    <property type="evidence" value="ECO:0007669"/>
    <property type="project" value="UniProtKB-UniRule"/>
</dbReference>
<dbReference type="GO" id="GO:0071555">
    <property type="term" value="P:cell wall organization"/>
    <property type="evidence" value="ECO:0007669"/>
    <property type="project" value="UniProtKB-KW"/>
</dbReference>
<dbReference type="GO" id="GO:0009252">
    <property type="term" value="P:peptidoglycan biosynthetic process"/>
    <property type="evidence" value="ECO:0007669"/>
    <property type="project" value="UniProtKB-KW"/>
</dbReference>
<dbReference type="GO" id="GO:0008360">
    <property type="term" value="P:regulation of cell shape"/>
    <property type="evidence" value="ECO:0007669"/>
    <property type="project" value="UniProtKB-KW"/>
</dbReference>
<dbReference type="GO" id="GO:0046677">
    <property type="term" value="P:response to antibiotic"/>
    <property type="evidence" value="ECO:0007669"/>
    <property type="project" value="UniProtKB-UniRule"/>
</dbReference>
<dbReference type="HAMAP" id="MF_01006">
    <property type="entry name" value="Undec_diphosphatase"/>
    <property type="match status" value="1"/>
</dbReference>
<dbReference type="InterPro" id="IPR003824">
    <property type="entry name" value="UppP"/>
</dbReference>
<dbReference type="NCBIfam" id="NF001388">
    <property type="entry name" value="PRK00281.1-1"/>
    <property type="match status" value="1"/>
</dbReference>
<dbReference type="NCBIfam" id="NF001389">
    <property type="entry name" value="PRK00281.1-2"/>
    <property type="match status" value="1"/>
</dbReference>
<dbReference type="NCBIfam" id="NF001390">
    <property type="entry name" value="PRK00281.1-4"/>
    <property type="match status" value="1"/>
</dbReference>
<dbReference type="NCBIfam" id="TIGR00753">
    <property type="entry name" value="undec_PP_bacA"/>
    <property type="match status" value="1"/>
</dbReference>
<dbReference type="PANTHER" id="PTHR30622">
    <property type="entry name" value="UNDECAPRENYL-DIPHOSPHATASE"/>
    <property type="match status" value="1"/>
</dbReference>
<dbReference type="PANTHER" id="PTHR30622:SF3">
    <property type="entry name" value="UNDECAPRENYL-DIPHOSPHATASE"/>
    <property type="match status" value="1"/>
</dbReference>
<dbReference type="Pfam" id="PF02673">
    <property type="entry name" value="BacA"/>
    <property type="match status" value="1"/>
</dbReference>
<reference key="1">
    <citation type="journal article" date="2006" name="BMC Genomics">
        <title>Complete genome sequence of Shigella flexneri 5b and comparison with Shigella flexneri 2a.</title>
        <authorList>
            <person name="Nie H."/>
            <person name="Yang F."/>
            <person name="Zhang X."/>
            <person name="Yang J."/>
            <person name="Chen L."/>
            <person name="Wang J."/>
            <person name="Xiong Z."/>
            <person name="Peng J."/>
            <person name="Sun L."/>
            <person name="Dong J."/>
            <person name="Xue Y."/>
            <person name="Xu X."/>
            <person name="Chen S."/>
            <person name="Yao Z."/>
            <person name="Shen Y."/>
            <person name="Jin Q."/>
        </authorList>
    </citation>
    <scope>NUCLEOTIDE SEQUENCE [LARGE SCALE GENOMIC DNA]</scope>
    <source>
        <strain>8401</strain>
    </source>
</reference>
<evidence type="ECO:0000255" key="1">
    <source>
        <dbReference type="HAMAP-Rule" id="MF_01006"/>
    </source>
</evidence>
<organism>
    <name type="scientific">Shigella flexneri serotype 5b (strain 8401)</name>
    <dbReference type="NCBI Taxonomy" id="373384"/>
    <lineage>
        <taxon>Bacteria</taxon>
        <taxon>Pseudomonadati</taxon>
        <taxon>Pseudomonadota</taxon>
        <taxon>Gammaproteobacteria</taxon>
        <taxon>Enterobacterales</taxon>
        <taxon>Enterobacteriaceae</taxon>
        <taxon>Shigella</taxon>
    </lineage>
</organism>
<proteinExistence type="inferred from homology"/>
<gene>
    <name evidence="1" type="primary">uppP</name>
    <name type="synonym">bacA</name>
    <name type="ordered locus">SFV_3097</name>
</gene>
<protein>
    <recommendedName>
        <fullName evidence="1">Undecaprenyl-diphosphatase</fullName>
        <ecNumber evidence="1">3.6.1.27</ecNumber>
    </recommendedName>
    <alternativeName>
        <fullName evidence="1">Bacitracin resistance protein</fullName>
    </alternativeName>
    <alternativeName>
        <fullName evidence="1">Undecaprenyl pyrophosphate phosphatase</fullName>
    </alternativeName>
</protein>
<feature type="chain" id="PRO_0000290768" description="Undecaprenyl-diphosphatase">
    <location>
        <begin position="1"/>
        <end position="273"/>
    </location>
</feature>
<feature type="transmembrane region" description="Helical" evidence="1">
    <location>
        <begin position="6"/>
        <end position="26"/>
    </location>
</feature>
<feature type="transmembrane region" description="Helical" evidence="1">
    <location>
        <begin position="45"/>
        <end position="65"/>
    </location>
</feature>
<feature type="transmembrane region" description="Helical" evidence="1">
    <location>
        <begin position="90"/>
        <end position="110"/>
    </location>
</feature>
<feature type="transmembrane region" description="Helical" evidence="1">
    <location>
        <begin position="116"/>
        <end position="136"/>
    </location>
</feature>
<feature type="transmembrane region" description="Helical" evidence="1">
    <location>
        <begin position="190"/>
        <end position="210"/>
    </location>
</feature>
<feature type="transmembrane region" description="Helical" evidence="1">
    <location>
        <begin position="222"/>
        <end position="242"/>
    </location>
</feature>
<feature type="transmembrane region" description="Helical" evidence="1">
    <location>
        <begin position="252"/>
        <end position="272"/>
    </location>
</feature>
<accession>Q0T0K6</accession>